<proteinExistence type="inferred from homology"/>
<feature type="chain" id="PRO_1000139211" description="Bifunctional protein PyrR">
    <location>
        <begin position="1"/>
        <end position="173"/>
    </location>
</feature>
<feature type="short sequence motif" description="PRPP-binding" evidence="1">
    <location>
        <begin position="93"/>
        <end position="105"/>
    </location>
</feature>
<organism>
    <name type="scientific">Streptococcus pneumoniae (strain CGSP14)</name>
    <dbReference type="NCBI Taxonomy" id="516950"/>
    <lineage>
        <taxon>Bacteria</taxon>
        <taxon>Bacillati</taxon>
        <taxon>Bacillota</taxon>
        <taxon>Bacilli</taxon>
        <taxon>Lactobacillales</taxon>
        <taxon>Streptococcaceae</taxon>
        <taxon>Streptococcus</taxon>
    </lineage>
</organism>
<protein>
    <recommendedName>
        <fullName evidence="1">Bifunctional protein PyrR</fullName>
    </recommendedName>
    <domain>
        <recommendedName>
            <fullName evidence="1">Pyrimidine operon regulatory protein</fullName>
        </recommendedName>
    </domain>
    <domain>
        <recommendedName>
            <fullName evidence="1">Uracil phosphoribosyltransferase</fullName>
            <shortName evidence="1">UPRTase</shortName>
            <ecNumber evidence="1">2.4.2.9</ecNumber>
        </recommendedName>
    </domain>
</protein>
<evidence type="ECO:0000255" key="1">
    <source>
        <dbReference type="HAMAP-Rule" id="MF_01219"/>
    </source>
</evidence>
<accession>B2IQ70</accession>
<comment type="function">
    <text evidence="1">Regulates transcriptional attenuation of the pyrimidine nucleotide (pyr) operon by binding in a uridine-dependent manner to specific sites on pyr mRNA. This disrupts an antiterminator hairpin in the RNA and favors formation of a downstream transcription terminator, leading to a reduced expression of downstream genes.</text>
</comment>
<comment type="function">
    <text evidence="1">Also displays a weak uracil phosphoribosyltransferase activity which is not physiologically significant.</text>
</comment>
<comment type="catalytic activity">
    <reaction evidence="1">
        <text>UMP + diphosphate = 5-phospho-alpha-D-ribose 1-diphosphate + uracil</text>
        <dbReference type="Rhea" id="RHEA:13017"/>
        <dbReference type="ChEBI" id="CHEBI:17568"/>
        <dbReference type="ChEBI" id="CHEBI:33019"/>
        <dbReference type="ChEBI" id="CHEBI:57865"/>
        <dbReference type="ChEBI" id="CHEBI:58017"/>
        <dbReference type="EC" id="2.4.2.9"/>
    </reaction>
</comment>
<comment type="subunit">
    <text evidence="1">Homodimer and homohexamer; in equilibrium.</text>
</comment>
<comment type="similarity">
    <text evidence="1">Belongs to the purine/pyrimidine phosphoribosyltransferase family. PyrR subfamily.</text>
</comment>
<reference key="1">
    <citation type="journal article" date="2009" name="BMC Genomics">
        <title>Genome evolution driven by host adaptations results in a more virulent and antimicrobial-resistant Streptococcus pneumoniae serotype 14.</title>
        <authorList>
            <person name="Ding F."/>
            <person name="Tang P."/>
            <person name="Hsu M.-H."/>
            <person name="Cui P."/>
            <person name="Hu S."/>
            <person name="Yu J."/>
            <person name="Chiu C.-H."/>
        </authorList>
    </citation>
    <scope>NUCLEOTIDE SEQUENCE [LARGE SCALE GENOMIC DNA]</scope>
    <source>
        <strain>CGSP14</strain>
    </source>
</reference>
<dbReference type="EC" id="2.4.2.9" evidence="1"/>
<dbReference type="EMBL" id="CP001033">
    <property type="protein sequence ID" value="ACB90494.1"/>
    <property type="molecule type" value="Genomic_DNA"/>
</dbReference>
<dbReference type="RefSeq" id="WP_000850024.1">
    <property type="nucleotide sequence ID" value="NC_010582.1"/>
</dbReference>
<dbReference type="SMR" id="B2IQ70"/>
<dbReference type="GeneID" id="45653435"/>
<dbReference type="KEGG" id="spw:SPCG_1242"/>
<dbReference type="HOGENOM" id="CLU_094234_2_1_9"/>
<dbReference type="GO" id="GO:0003723">
    <property type="term" value="F:RNA binding"/>
    <property type="evidence" value="ECO:0007669"/>
    <property type="project" value="UniProtKB-UniRule"/>
</dbReference>
<dbReference type="GO" id="GO:0004845">
    <property type="term" value="F:uracil phosphoribosyltransferase activity"/>
    <property type="evidence" value="ECO:0007669"/>
    <property type="project" value="UniProtKB-UniRule"/>
</dbReference>
<dbReference type="GO" id="GO:0006353">
    <property type="term" value="P:DNA-templated transcription termination"/>
    <property type="evidence" value="ECO:0007669"/>
    <property type="project" value="UniProtKB-UniRule"/>
</dbReference>
<dbReference type="CDD" id="cd06223">
    <property type="entry name" value="PRTases_typeI"/>
    <property type="match status" value="1"/>
</dbReference>
<dbReference type="FunFam" id="3.40.50.2020:FF:000020">
    <property type="entry name" value="Bifunctional protein PyrR"/>
    <property type="match status" value="1"/>
</dbReference>
<dbReference type="Gene3D" id="3.40.50.2020">
    <property type="match status" value="1"/>
</dbReference>
<dbReference type="HAMAP" id="MF_01219">
    <property type="entry name" value="PyrR"/>
    <property type="match status" value="1"/>
</dbReference>
<dbReference type="InterPro" id="IPR000836">
    <property type="entry name" value="PRibTrfase_dom"/>
</dbReference>
<dbReference type="InterPro" id="IPR029057">
    <property type="entry name" value="PRTase-like"/>
</dbReference>
<dbReference type="InterPro" id="IPR023050">
    <property type="entry name" value="PyrR"/>
</dbReference>
<dbReference type="InterPro" id="IPR050137">
    <property type="entry name" value="PyrR_bifunctional"/>
</dbReference>
<dbReference type="NCBIfam" id="NF003548">
    <property type="entry name" value="PRK05205.1-4"/>
    <property type="match status" value="1"/>
</dbReference>
<dbReference type="NCBIfam" id="NF003549">
    <property type="entry name" value="PRK05205.1-5"/>
    <property type="match status" value="1"/>
</dbReference>
<dbReference type="PANTHER" id="PTHR11608">
    <property type="entry name" value="BIFUNCTIONAL PROTEIN PYRR"/>
    <property type="match status" value="1"/>
</dbReference>
<dbReference type="PANTHER" id="PTHR11608:SF0">
    <property type="entry name" value="BIFUNCTIONAL PROTEIN PYRR"/>
    <property type="match status" value="1"/>
</dbReference>
<dbReference type="Pfam" id="PF00156">
    <property type="entry name" value="Pribosyltran"/>
    <property type="match status" value="1"/>
</dbReference>
<dbReference type="SUPFAM" id="SSF53271">
    <property type="entry name" value="PRTase-like"/>
    <property type="match status" value="1"/>
</dbReference>
<name>PYRR_STRPS</name>
<gene>
    <name evidence="1" type="primary">pyrR</name>
    <name type="ordered locus">SPCG_1242</name>
</gene>
<sequence length="173" mass="19608">MKTKEVVDELTVKRAITRITYEIIERNKDLNKIVLAGIKTRGVFIAHRIQERLKQLENLSVPVVELDTKPFRDDVKSGEDTSLVSVDVTDREVILVDDVLYTGRTIRAAIDNIVGHGRPARVSLAVLVDRGHRELPIRPDYVGKNIPTSRSEEIIVEMTELDDQDRVLITEEA</sequence>
<keyword id="KW-0328">Glycosyltransferase</keyword>
<keyword id="KW-0694">RNA-binding</keyword>
<keyword id="KW-0804">Transcription</keyword>
<keyword id="KW-0805">Transcription regulation</keyword>
<keyword id="KW-0806">Transcription termination</keyword>
<keyword id="KW-0808">Transferase</keyword>